<keyword id="KW-0963">Cytoplasm</keyword>
<keyword id="KW-1185">Reference proteome</keyword>
<protein>
    <recommendedName>
        <fullName evidence="1">Nucleoid-associated protein YejK</fullName>
    </recommendedName>
</protein>
<evidence type="ECO:0000255" key="1">
    <source>
        <dbReference type="HAMAP-Rule" id="MF_00730"/>
    </source>
</evidence>
<name>NDPA_SHIDS</name>
<dbReference type="EMBL" id="CP000034">
    <property type="protein sequence ID" value="ABB61069.1"/>
    <property type="molecule type" value="Genomic_DNA"/>
</dbReference>
<dbReference type="RefSeq" id="WP_000050789.1">
    <property type="nucleotide sequence ID" value="NC_007606.1"/>
</dbReference>
<dbReference type="RefSeq" id="YP_402560.1">
    <property type="nucleotide sequence ID" value="NC_007606.1"/>
</dbReference>
<dbReference type="SMR" id="Q32HY6"/>
<dbReference type="STRING" id="300267.SDY_0893"/>
<dbReference type="EnsemblBacteria" id="ABB61069">
    <property type="protein sequence ID" value="ABB61069"/>
    <property type="gene ID" value="SDY_0893"/>
</dbReference>
<dbReference type="GeneID" id="75206440"/>
<dbReference type="KEGG" id="sdy:SDY_0893"/>
<dbReference type="PATRIC" id="fig|300267.13.peg.1034"/>
<dbReference type="HOGENOM" id="CLU_063050_0_1_6"/>
<dbReference type="Proteomes" id="UP000002716">
    <property type="component" value="Chromosome"/>
</dbReference>
<dbReference type="GO" id="GO:0043590">
    <property type="term" value="C:bacterial nucleoid"/>
    <property type="evidence" value="ECO:0007669"/>
    <property type="project" value="TreeGrafter"/>
</dbReference>
<dbReference type="GO" id="GO:0005737">
    <property type="term" value="C:cytoplasm"/>
    <property type="evidence" value="ECO:0007669"/>
    <property type="project" value="UniProtKB-UniRule"/>
</dbReference>
<dbReference type="GO" id="GO:0003690">
    <property type="term" value="F:double-stranded DNA binding"/>
    <property type="evidence" value="ECO:0007669"/>
    <property type="project" value="TreeGrafter"/>
</dbReference>
<dbReference type="GO" id="GO:0003727">
    <property type="term" value="F:single-stranded RNA binding"/>
    <property type="evidence" value="ECO:0007669"/>
    <property type="project" value="TreeGrafter"/>
</dbReference>
<dbReference type="HAMAP" id="MF_00730">
    <property type="entry name" value="NdpA"/>
    <property type="match status" value="1"/>
</dbReference>
<dbReference type="InterPro" id="IPR007358">
    <property type="entry name" value="Nucleoid_associated_NdpA"/>
</dbReference>
<dbReference type="NCBIfam" id="NF001557">
    <property type="entry name" value="PRK00378.1"/>
    <property type="match status" value="1"/>
</dbReference>
<dbReference type="PANTHER" id="PTHR38772">
    <property type="match status" value="1"/>
</dbReference>
<dbReference type="PANTHER" id="PTHR38772:SF1">
    <property type="entry name" value="NUCLEOID-ASSOCIATED PROTEIN YEJK"/>
    <property type="match status" value="1"/>
</dbReference>
<dbReference type="Pfam" id="PF04245">
    <property type="entry name" value="NA37"/>
    <property type="match status" value="1"/>
</dbReference>
<proteinExistence type="inferred from homology"/>
<reference key="1">
    <citation type="journal article" date="2005" name="Nucleic Acids Res.">
        <title>Genome dynamics and diversity of Shigella species, the etiologic agents of bacillary dysentery.</title>
        <authorList>
            <person name="Yang F."/>
            <person name="Yang J."/>
            <person name="Zhang X."/>
            <person name="Chen L."/>
            <person name="Jiang Y."/>
            <person name="Yan Y."/>
            <person name="Tang X."/>
            <person name="Wang J."/>
            <person name="Xiong Z."/>
            <person name="Dong J."/>
            <person name="Xue Y."/>
            <person name="Zhu Y."/>
            <person name="Xu X."/>
            <person name="Sun L."/>
            <person name="Chen S."/>
            <person name="Nie H."/>
            <person name="Peng J."/>
            <person name="Xu J."/>
            <person name="Wang Y."/>
            <person name="Yuan Z."/>
            <person name="Wen Y."/>
            <person name="Yao Z."/>
            <person name="Shen Y."/>
            <person name="Qiang B."/>
            <person name="Hou Y."/>
            <person name="Yu J."/>
            <person name="Jin Q."/>
        </authorList>
    </citation>
    <scope>NUCLEOTIDE SEQUENCE [LARGE SCALE GENOMIC DNA]</scope>
    <source>
        <strain>Sd197</strain>
    </source>
</reference>
<organism>
    <name type="scientific">Shigella dysenteriae serotype 1 (strain Sd197)</name>
    <dbReference type="NCBI Taxonomy" id="300267"/>
    <lineage>
        <taxon>Bacteria</taxon>
        <taxon>Pseudomonadati</taxon>
        <taxon>Pseudomonadota</taxon>
        <taxon>Gammaproteobacteria</taxon>
        <taxon>Enterobacterales</taxon>
        <taxon>Enterobacteriaceae</taxon>
        <taxon>Shigella</taxon>
    </lineage>
</organism>
<feature type="chain" id="PRO_1000045952" description="Nucleoid-associated protein YejK">
    <location>
        <begin position="1"/>
        <end position="335"/>
    </location>
</feature>
<sequence length="335" mass="37823">MSLDINQIALHQLIKRDEQNLELVLRDSLLEPTETVVEMVAELHRVYSAKNKAYGLFSEESELAQTLRLQRQGEEDFLAFSRAATGRLRDELAKYPFADGGFVLFCHYRYLAVEYLLVAVLSNLSSMRVNENLDINPTHYLDINHADIVARIDLTEWETNPESTRYLTFLKGRVGRKVADFFMDFLGASEGLNAKAQNRGLLQAVDDFTAEAQLDKAERQNVRQQVYSYCNEQLQAGEEIELESLSKELAGVSEVSFTEFAAEKGYELEESFPADRSTLRQLTKFAGSGGGLTINFDAMLLGERIFWDPATDTLTIKGTPPNLRDQLQRRTSGGN</sequence>
<accession>Q32HY6</accession>
<gene>
    <name evidence="1" type="primary">yejK</name>
    <name type="ordered locus">SDY_0893</name>
</gene>
<comment type="subcellular location">
    <subcellularLocation>
        <location evidence="1">Cytoplasm</location>
        <location evidence="1">Nucleoid</location>
    </subcellularLocation>
</comment>
<comment type="similarity">
    <text evidence="1">Belongs to the YejK family.</text>
</comment>